<proteinExistence type="evidence at protein level"/>
<dbReference type="EC" id="4.2.3.123"/>
<dbReference type="EMBL" id="CM000766">
    <property type="protein sequence ID" value="EES13422.1"/>
    <property type="molecule type" value="Genomic_DNA"/>
</dbReference>
<dbReference type="SMR" id="C5YHI2"/>
<dbReference type="FunCoup" id="C5YHI2">
    <property type="interactions" value="505"/>
</dbReference>
<dbReference type="STRING" id="4558.C5YHI2"/>
<dbReference type="EnsemblPlants" id="EES14619">
    <property type="protein sequence ID" value="EES14619"/>
    <property type="gene ID" value="SORBI_3007G055700"/>
</dbReference>
<dbReference type="Gramene" id="EES14619">
    <property type="protein sequence ID" value="EES14619"/>
    <property type="gene ID" value="SORBI_3007G055700"/>
</dbReference>
<dbReference type="KEGG" id="sbi:8080877"/>
<dbReference type="eggNOG" id="ENOG502QUCN">
    <property type="taxonomic scope" value="Eukaryota"/>
</dbReference>
<dbReference type="HOGENOM" id="CLU_003125_7_2_1"/>
<dbReference type="InParanoid" id="C5YHI2"/>
<dbReference type="OMA" id="TIHDACE"/>
<dbReference type="OrthoDB" id="1877784at2759"/>
<dbReference type="BRENDA" id="4.2.3.123">
    <property type="organism ID" value="5768"/>
</dbReference>
<dbReference type="UniPathway" id="UPA00213"/>
<dbReference type="Proteomes" id="UP000000768">
    <property type="component" value="Chromosome 7"/>
</dbReference>
<dbReference type="ExpressionAtlas" id="C5YHI2">
    <property type="expression patterns" value="baseline and differential"/>
</dbReference>
<dbReference type="GO" id="GO:0005737">
    <property type="term" value="C:cytoplasm"/>
    <property type="evidence" value="ECO:0007669"/>
    <property type="project" value="UniProtKB-SubCell"/>
</dbReference>
<dbReference type="GO" id="GO:0102887">
    <property type="term" value="F:beta-sesquiphellandrene synthase activity"/>
    <property type="evidence" value="ECO:0007669"/>
    <property type="project" value="UniProtKB-EC"/>
</dbReference>
<dbReference type="GO" id="GO:0000287">
    <property type="term" value="F:magnesium ion binding"/>
    <property type="evidence" value="ECO:0007669"/>
    <property type="project" value="InterPro"/>
</dbReference>
<dbReference type="GO" id="GO:0010333">
    <property type="term" value="F:terpene synthase activity"/>
    <property type="evidence" value="ECO:0007669"/>
    <property type="project" value="InterPro"/>
</dbReference>
<dbReference type="GO" id="GO:0006952">
    <property type="term" value="P:defense response"/>
    <property type="evidence" value="ECO:0007669"/>
    <property type="project" value="UniProtKB-KW"/>
</dbReference>
<dbReference type="GO" id="GO:0016102">
    <property type="term" value="P:diterpenoid biosynthetic process"/>
    <property type="evidence" value="ECO:0007669"/>
    <property type="project" value="InterPro"/>
</dbReference>
<dbReference type="CDD" id="cd00684">
    <property type="entry name" value="Terpene_cyclase_plant_C1"/>
    <property type="match status" value="1"/>
</dbReference>
<dbReference type="FunFam" id="1.10.600.10:FF:000007">
    <property type="entry name" value="Isoprene synthase, chloroplastic"/>
    <property type="match status" value="1"/>
</dbReference>
<dbReference type="Gene3D" id="1.10.600.10">
    <property type="entry name" value="Farnesyl Diphosphate Synthase"/>
    <property type="match status" value="1"/>
</dbReference>
<dbReference type="Gene3D" id="1.50.10.130">
    <property type="entry name" value="Terpene synthase, N-terminal domain"/>
    <property type="match status" value="1"/>
</dbReference>
<dbReference type="InterPro" id="IPR008949">
    <property type="entry name" value="Isoprenoid_synthase_dom_sf"/>
</dbReference>
<dbReference type="InterPro" id="IPR034741">
    <property type="entry name" value="Terpene_cyclase-like_1_C"/>
</dbReference>
<dbReference type="InterPro" id="IPR044814">
    <property type="entry name" value="Terpene_cyclase_plant_C1"/>
</dbReference>
<dbReference type="InterPro" id="IPR001906">
    <property type="entry name" value="Terpene_synth_N"/>
</dbReference>
<dbReference type="InterPro" id="IPR036965">
    <property type="entry name" value="Terpene_synth_N_sf"/>
</dbReference>
<dbReference type="InterPro" id="IPR050148">
    <property type="entry name" value="Terpene_synthase-like"/>
</dbReference>
<dbReference type="InterPro" id="IPR005630">
    <property type="entry name" value="Terpene_synthase_metal-bd"/>
</dbReference>
<dbReference type="InterPro" id="IPR008930">
    <property type="entry name" value="Terpenoid_cyclase/PrenylTrfase"/>
</dbReference>
<dbReference type="PANTHER" id="PTHR31225:SF118">
    <property type="entry name" value="(E)-BETA-FARNESENE SYNTHASE"/>
    <property type="match status" value="1"/>
</dbReference>
<dbReference type="PANTHER" id="PTHR31225">
    <property type="entry name" value="OS04G0344100 PROTEIN-RELATED"/>
    <property type="match status" value="1"/>
</dbReference>
<dbReference type="Pfam" id="PF01397">
    <property type="entry name" value="Terpene_synth"/>
    <property type="match status" value="1"/>
</dbReference>
<dbReference type="Pfam" id="PF03936">
    <property type="entry name" value="Terpene_synth_C"/>
    <property type="match status" value="1"/>
</dbReference>
<dbReference type="SFLD" id="SFLDS00005">
    <property type="entry name" value="Isoprenoid_Synthase_Type_I"/>
    <property type="match status" value="1"/>
</dbReference>
<dbReference type="SFLD" id="SFLDG01019">
    <property type="entry name" value="Terpene_Cyclase_Like_1_C_Termi"/>
    <property type="match status" value="1"/>
</dbReference>
<dbReference type="SUPFAM" id="SSF48239">
    <property type="entry name" value="Terpenoid cyclases/Protein prenyltransferases"/>
    <property type="match status" value="1"/>
</dbReference>
<dbReference type="SUPFAM" id="SSF48576">
    <property type="entry name" value="Terpenoid synthases"/>
    <property type="match status" value="1"/>
</dbReference>
<reference key="1">
    <citation type="journal article" date="2012" name="Plant J.">
        <title>Dynamic evolution of herbivore-induced sesquiterpene biosynthesis in sorghum and related grass crops.</title>
        <authorList>
            <person name="Zhuang X."/>
            <person name="Koellner T.G."/>
            <person name="Zhao N."/>
            <person name="Li G."/>
            <person name="Jiang Y."/>
            <person name="Zhu L."/>
            <person name="Ma J."/>
            <person name="Degenhardt J."/>
            <person name="Chen F."/>
        </authorList>
    </citation>
    <scope>NUCLEOTIDE SEQUENCE [MRNA]</scope>
    <scope>MUTAGENESIS OF TYR-373 AND VAL-405</scope>
    <scope>FUNCTION</scope>
    <scope>CATALYTIC ACTIVITY</scope>
    <scope>INDUCTION BY HERBIVORY</scope>
</reference>
<reference key="2">
    <citation type="journal article" date="2009" name="Nature">
        <title>The Sorghum bicolor genome and the diversification of grasses.</title>
        <authorList>
            <person name="Paterson A.H."/>
            <person name="Bowers J.E."/>
            <person name="Bruggmann R."/>
            <person name="Dubchak I."/>
            <person name="Grimwood J."/>
            <person name="Gundlach H."/>
            <person name="Haberer G."/>
            <person name="Hellsten U."/>
            <person name="Mitros T."/>
            <person name="Poliakov A."/>
            <person name="Schmutz J."/>
            <person name="Spannagl M."/>
            <person name="Tang H."/>
            <person name="Wang X."/>
            <person name="Wicker T."/>
            <person name="Bharti A.K."/>
            <person name="Chapman J."/>
            <person name="Feltus F.A."/>
            <person name="Gowik U."/>
            <person name="Grigoriev I.V."/>
            <person name="Lyons E."/>
            <person name="Maher C.A."/>
            <person name="Martis M."/>
            <person name="Narechania A."/>
            <person name="Otillar R.P."/>
            <person name="Penning B.W."/>
            <person name="Salamov A.A."/>
            <person name="Wang Y."/>
            <person name="Zhang L."/>
            <person name="Carpita N.C."/>
            <person name="Freeling M."/>
            <person name="Gingle A.R."/>
            <person name="Hash C.T."/>
            <person name="Keller B."/>
            <person name="Klein P."/>
            <person name="Kresovich S."/>
            <person name="McCann M.C."/>
            <person name="Ming R."/>
            <person name="Peterson D.G."/>
            <person name="Mehboob-ur-Rahman M."/>
            <person name="Ware D."/>
            <person name="Westhoff P."/>
            <person name="Mayer K.F.X."/>
            <person name="Messing J."/>
            <person name="Rokhsar D.S."/>
        </authorList>
    </citation>
    <scope>NUCLEOTIDE SEQUENCE [LARGE SCALE GENOMIC DNA] OF 22-544</scope>
    <source>
        <strain>cv. BTx623</strain>
    </source>
</reference>
<reference key="3">
    <citation type="journal article" date="2018" name="Plant J.">
        <title>The Sorghum bicolor reference genome: improved assembly, gene annotations, a transcriptome atlas, and signatures of genome organization.</title>
        <authorList>
            <person name="McCormick R.F."/>
            <person name="Truong S.K."/>
            <person name="Sreedasyam A."/>
            <person name="Jenkins J."/>
            <person name="Shu S."/>
            <person name="Sims D."/>
            <person name="Kennedy M."/>
            <person name="Amirebrahimi M."/>
            <person name="Weers B.D."/>
            <person name="McKinley B."/>
            <person name="Mattison A."/>
            <person name="Morishige D.T."/>
            <person name="Grimwood J."/>
            <person name="Schmutz J."/>
            <person name="Mullet J.E."/>
        </authorList>
    </citation>
    <scope>GENOME REANNOTATION</scope>
    <source>
        <strain>cv. BTx623</strain>
    </source>
</reference>
<gene>
    <name type="primary">TPS2</name>
    <name type="ordered locus">Sb07g004485</name>
</gene>
<name>TPS2_SORBI</name>
<comment type="function">
    <text evidence="2">Sesquiterpene synthase converting farnesyl diphosphate into beta-sesquiphellandrene and six minor products, zingiberene, 7-epi-sesquithujene, sesquisabinene A, (E)-alpha-bergamotene, (E)-beta-farnesene and beta-bisabolene. Can also accept geranyl diphosphate as substrate, producing nine monoterpenes, with myrcene and limonene as the major products.</text>
</comment>
<comment type="catalytic activity">
    <reaction evidence="2">
        <text>(2E,6E)-farnesyl diphosphate = beta-sesquiphellandrene + diphosphate</text>
        <dbReference type="Rhea" id="RHEA:32699"/>
        <dbReference type="ChEBI" id="CHEBI:33019"/>
        <dbReference type="ChEBI" id="CHEBI:64361"/>
        <dbReference type="ChEBI" id="CHEBI:175763"/>
        <dbReference type="EC" id="4.2.3.123"/>
    </reaction>
</comment>
<comment type="cofactor">
    <cofactor evidence="1">
        <name>Mg(2+)</name>
        <dbReference type="ChEBI" id="CHEBI:18420"/>
    </cofactor>
    <cofactor evidence="1">
        <name>Mn(2+)</name>
        <dbReference type="ChEBI" id="CHEBI:29035"/>
    </cofactor>
    <text evidence="1">Binds 3 Mg(2+) or Mn(2+) ions per subunit.</text>
</comment>
<comment type="pathway">
    <text>Secondary metabolite biosynthesis; terpenoid biosynthesis.</text>
</comment>
<comment type="subcellular location">
    <subcellularLocation>
        <location evidence="3">Cytoplasm</location>
    </subcellularLocation>
</comment>
<comment type="induction">
    <text evidence="2">Up-regulated by herbivory.</text>
</comment>
<comment type="domain">
    <text evidence="1">The Asp-Asp-Xaa-Xaa-Asp/Glu (DDXXD/E) motif is important for the catalytic activity, presumably through binding to Mg(2+).</text>
</comment>
<comment type="similarity">
    <text evidence="3">Belongs to the terpene synthase family.</text>
</comment>
<protein>
    <recommendedName>
        <fullName>Beta-sesquiphellandrene synthase</fullName>
        <shortName>SbTPS2</shortName>
        <ecNumber>4.2.3.123</ecNumber>
    </recommendedName>
</protein>
<feature type="chain" id="PRO_0000418830" description="Beta-sesquiphellandrene synthase">
    <location>
        <begin position="1"/>
        <end position="545"/>
    </location>
</feature>
<feature type="short sequence motif" description="DDXXD motif">
    <location>
        <begin position="299"/>
        <end position="303"/>
    </location>
</feature>
<feature type="binding site" evidence="1">
    <location>
        <position position="299"/>
    </location>
    <ligand>
        <name>Mg(2+)</name>
        <dbReference type="ChEBI" id="CHEBI:18420"/>
        <label>1</label>
    </ligand>
</feature>
<feature type="binding site" evidence="1">
    <location>
        <position position="299"/>
    </location>
    <ligand>
        <name>Mg(2+)</name>
        <dbReference type="ChEBI" id="CHEBI:18420"/>
        <label>2</label>
    </ligand>
</feature>
<feature type="binding site" evidence="1">
    <location>
        <position position="303"/>
    </location>
    <ligand>
        <name>Mg(2+)</name>
        <dbReference type="ChEBI" id="CHEBI:18420"/>
        <label>1</label>
    </ligand>
</feature>
<feature type="binding site" evidence="1">
    <location>
        <position position="303"/>
    </location>
    <ligand>
        <name>Mg(2+)</name>
        <dbReference type="ChEBI" id="CHEBI:18420"/>
        <label>2</label>
    </ligand>
</feature>
<feature type="binding site" evidence="1">
    <location>
        <position position="443"/>
    </location>
    <ligand>
        <name>Mg(2+)</name>
        <dbReference type="ChEBI" id="CHEBI:18420"/>
        <label>3</label>
    </ligand>
</feature>
<feature type="binding site" evidence="1">
    <location>
        <position position="447"/>
    </location>
    <ligand>
        <name>Mg(2+)</name>
        <dbReference type="ChEBI" id="CHEBI:18420"/>
        <label>3</label>
    </ligand>
</feature>
<feature type="binding site" evidence="1">
    <location>
        <position position="451"/>
    </location>
    <ligand>
        <name>Mg(2+)</name>
        <dbReference type="ChEBI" id="CHEBI:18420"/>
        <label>3</label>
    </ligand>
</feature>
<feature type="mutagenesis site" description="Increased production of (E)-alpha-bergamotene and (E)-beta-farnesene." evidence="2">
    <original>Y</original>
    <variation>S</variation>
    <location>
        <position position="373"/>
    </location>
</feature>
<feature type="mutagenesis site" description="Changed product specificity and production of mainly zingiberene." evidence="2">
    <original>V</original>
    <variation>L</variation>
    <location>
        <position position="405"/>
    </location>
</feature>
<sequence length="545" mass="63360">MALTPSVCSISDVQGLQKDRTFHPSLWGDFFLTYQPPTAPKHAYMAERAEVLKEEVRKMVKSANEIQNILDLILTLQRLGLDNHYENEINELLSFVHDSDYDDKDLNLVSLRFYLLRKHGYDVSSDVFKCFQDKEGNFVVKDTKSLLSLYNAAHLRIHGEEVLDEAIIFTRGKLESVLDSLETTLADEVTLALQTPLFRRVRILETRNYIPIYEKEVARNEVILEFAKLNFNLLQLLYCEELKMITLWWKQLNVETNLSFIRDRIVEMHFWMTGACSEKKYSLTRTITTKMTAYITILDDIMDTHSTTEEAMLLAEAIYRCEENAAELLPEYMKDFYLYLLKTFDSVKHELGPNRSFRVFYLKELLKILVRGYSQEIKWRDEHYVPETIDEHLEVSKATVGAFQVACSSFVGMGDIITKEILDWLLSYPKLLKSMTTFVRLSNDIASTKREQTGGHHASTVQCYMMQHGTTIHDACEKIKELTEDTWKDMMKLYLTPTEQPKVIIQTVLDFARTAEFMYKKTDAFTFSHTIKDTIALLFVEPTLV</sequence>
<evidence type="ECO:0000250" key="1"/>
<evidence type="ECO:0000269" key="2">
    <source>
    </source>
</evidence>
<evidence type="ECO:0000305" key="3"/>
<keyword id="KW-0963">Cytoplasm</keyword>
<keyword id="KW-0456">Lyase</keyword>
<keyword id="KW-0460">Magnesium</keyword>
<keyword id="KW-0464">Manganese</keyword>
<keyword id="KW-0479">Metal-binding</keyword>
<keyword id="KW-0611">Plant defense</keyword>
<keyword id="KW-1185">Reference proteome</keyword>
<accession>C5YHI2</accession>
<organism>
    <name type="scientific">Sorghum bicolor</name>
    <name type="common">Sorghum</name>
    <name type="synonym">Sorghum vulgare</name>
    <dbReference type="NCBI Taxonomy" id="4558"/>
    <lineage>
        <taxon>Eukaryota</taxon>
        <taxon>Viridiplantae</taxon>
        <taxon>Streptophyta</taxon>
        <taxon>Embryophyta</taxon>
        <taxon>Tracheophyta</taxon>
        <taxon>Spermatophyta</taxon>
        <taxon>Magnoliopsida</taxon>
        <taxon>Liliopsida</taxon>
        <taxon>Poales</taxon>
        <taxon>Poaceae</taxon>
        <taxon>PACMAD clade</taxon>
        <taxon>Panicoideae</taxon>
        <taxon>Andropogonodae</taxon>
        <taxon>Andropogoneae</taxon>
        <taxon>Sorghinae</taxon>
        <taxon>Sorghum</taxon>
    </lineage>
</organism>